<organism>
    <name type="scientific">Klebsiella pneumoniae subsp. pneumoniae (strain ATCC 700721 / MGH 78578)</name>
    <dbReference type="NCBI Taxonomy" id="272620"/>
    <lineage>
        <taxon>Bacteria</taxon>
        <taxon>Pseudomonadati</taxon>
        <taxon>Pseudomonadota</taxon>
        <taxon>Gammaproteobacteria</taxon>
        <taxon>Enterobacterales</taxon>
        <taxon>Enterobacteriaceae</taxon>
        <taxon>Klebsiella/Raoultella group</taxon>
        <taxon>Klebsiella</taxon>
        <taxon>Klebsiella pneumoniae complex</taxon>
    </lineage>
</organism>
<reference key="1">
    <citation type="submission" date="2006-09" db="EMBL/GenBank/DDBJ databases">
        <authorList>
            <consortium name="The Klebsiella pneumonia Genome Sequencing Project"/>
            <person name="McClelland M."/>
            <person name="Sanderson E.K."/>
            <person name="Spieth J."/>
            <person name="Clifton W.S."/>
            <person name="Latreille P."/>
            <person name="Sabo A."/>
            <person name="Pepin K."/>
            <person name="Bhonagiri V."/>
            <person name="Porwollik S."/>
            <person name="Ali J."/>
            <person name="Wilson R.K."/>
        </authorList>
    </citation>
    <scope>NUCLEOTIDE SEQUENCE [LARGE SCALE GENOMIC DNA]</scope>
    <source>
        <strain>ATCC 700721 / MGH 78578</strain>
    </source>
</reference>
<name>RLMG_KLEP7</name>
<keyword id="KW-0963">Cytoplasm</keyword>
<keyword id="KW-0489">Methyltransferase</keyword>
<keyword id="KW-0698">rRNA processing</keyword>
<keyword id="KW-0949">S-adenosyl-L-methionine</keyword>
<keyword id="KW-0808">Transferase</keyword>
<protein>
    <recommendedName>
        <fullName evidence="1">Ribosomal RNA large subunit methyltransferase G</fullName>
        <ecNumber evidence="1">2.1.1.174</ecNumber>
    </recommendedName>
    <alternativeName>
        <fullName evidence="1">23S rRNA m2G1835 methyltransferase</fullName>
    </alternativeName>
    <alternativeName>
        <fullName evidence="1">rRNA (guanine-N(2)-)-methyltransferase RlmG</fullName>
    </alternativeName>
</protein>
<comment type="function">
    <text evidence="1">Specifically methylates the guanine in position 1835 (m2G1835) of 23S rRNA.</text>
</comment>
<comment type="catalytic activity">
    <reaction evidence="1">
        <text>guanosine(1835) in 23S rRNA + S-adenosyl-L-methionine = N(2)-methylguanosine(1835) in 23S rRNA + S-adenosyl-L-homocysteine + H(+)</text>
        <dbReference type="Rhea" id="RHEA:42744"/>
        <dbReference type="Rhea" id="RHEA-COMP:10217"/>
        <dbReference type="Rhea" id="RHEA-COMP:10218"/>
        <dbReference type="ChEBI" id="CHEBI:15378"/>
        <dbReference type="ChEBI" id="CHEBI:57856"/>
        <dbReference type="ChEBI" id="CHEBI:59789"/>
        <dbReference type="ChEBI" id="CHEBI:74269"/>
        <dbReference type="ChEBI" id="CHEBI:74481"/>
        <dbReference type="EC" id="2.1.1.174"/>
    </reaction>
</comment>
<comment type="subcellular location">
    <subcellularLocation>
        <location evidence="1">Cytoplasm</location>
    </subcellularLocation>
</comment>
<comment type="similarity">
    <text evidence="1">Belongs to the methyltransferase superfamily. RlmG family.</text>
</comment>
<gene>
    <name evidence="1" type="primary">rlmG</name>
    <name type="ordered locus">KPN78578_34820</name>
    <name type="ORF">KPN_03511</name>
</gene>
<dbReference type="EC" id="2.1.1.174" evidence="1"/>
<dbReference type="EMBL" id="CP000647">
    <property type="protein sequence ID" value="ABR78906.1"/>
    <property type="molecule type" value="Genomic_DNA"/>
</dbReference>
<dbReference type="RefSeq" id="WP_002917887.1">
    <property type="nucleotide sequence ID" value="NC_009648.1"/>
</dbReference>
<dbReference type="SMR" id="A6TEC2"/>
<dbReference type="STRING" id="272620.KPN_03511"/>
<dbReference type="PaxDb" id="272620-KPN_03511"/>
<dbReference type="EnsemblBacteria" id="ABR78906">
    <property type="protein sequence ID" value="ABR78906"/>
    <property type="gene ID" value="KPN_03511"/>
</dbReference>
<dbReference type="KEGG" id="kpn:KPN_03511"/>
<dbReference type="HOGENOM" id="CLU_040288_4_0_6"/>
<dbReference type="Proteomes" id="UP000000265">
    <property type="component" value="Chromosome"/>
</dbReference>
<dbReference type="GO" id="GO:0005737">
    <property type="term" value="C:cytoplasm"/>
    <property type="evidence" value="ECO:0007669"/>
    <property type="project" value="UniProtKB-SubCell"/>
</dbReference>
<dbReference type="GO" id="GO:0052916">
    <property type="term" value="F:23S rRNA (guanine(1835)-N(2))-methyltransferase activity"/>
    <property type="evidence" value="ECO:0007669"/>
    <property type="project" value="UniProtKB-EC"/>
</dbReference>
<dbReference type="GO" id="GO:0003676">
    <property type="term" value="F:nucleic acid binding"/>
    <property type="evidence" value="ECO:0007669"/>
    <property type="project" value="InterPro"/>
</dbReference>
<dbReference type="CDD" id="cd02440">
    <property type="entry name" value="AdoMet_MTases"/>
    <property type="match status" value="1"/>
</dbReference>
<dbReference type="FunFam" id="3.40.50.150:FF:000046">
    <property type="entry name" value="Ribosomal RNA large subunit methyltransferase G"/>
    <property type="match status" value="1"/>
</dbReference>
<dbReference type="Gene3D" id="3.40.50.150">
    <property type="entry name" value="Vaccinia Virus protein VP39"/>
    <property type="match status" value="2"/>
</dbReference>
<dbReference type="HAMAP" id="MF_01859">
    <property type="entry name" value="23SrRNA_methyltr_G"/>
    <property type="match status" value="1"/>
</dbReference>
<dbReference type="InterPro" id="IPR002052">
    <property type="entry name" value="DNA_methylase_N6_adenine_CS"/>
</dbReference>
<dbReference type="InterPro" id="IPR017237">
    <property type="entry name" value="rRNA_m2G-MeTrfase_RlmG"/>
</dbReference>
<dbReference type="InterPro" id="IPR046977">
    <property type="entry name" value="RsmC/RlmG"/>
</dbReference>
<dbReference type="InterPro" id="IPR029063">
    <property type="entry name" value="SAM-dependent_MTases_sf"/>
</dbReference>
<dbReference type="InterPro" id="IPR007848">
    <property type="entry name" value="Small_mtfrase_dom"/>
</dbReference>
<dbReference type="NCBIfam" id="NF011577">
    <property type="entry name" value="PRK15001.1"/>
    <property type="match status" value="1"/>
</dbReference>
<dbReference type="PANTHER" id="PTHR47816:SF5">
    <property type="entry name" value="RIBOSOMAL RNA LARGE SUBUNIT METHYLTRANSFERASE G"/>
    <property type="match status" value="1"/>
</dbReference>
<dbReference type="PANTHER" id="PTHR47816">
    <property type="entry name" value="RIBOSOMAL RNA SMALL SUBUNIT METHYLTRANSFERASE C"/>
    <property type="match status" value="1"/>
</dbReference>
<dbReference type="Pfam" id="PF05175">
    <property type="entry name" value="MTS"/>
    <property type="match status" value="1"/>
</dbReference>
<dbReference type="PIRSF" id="PIRSF037565">
    <property type="entry name" value="RRNA_m2G_Mtase_RsmD_prd"/>
    <property type="match status" value="1"/>
</dbReference>
<dbReference type="SUPFAM" id="SSF53335">
    <property type="entry name" value="S-adenosyl-L-methionine-dependent methyltransferases"/>
    <property type="match status" value="1"/>
</dbReference>
<sequence>MSQAELNGELFTLERFPPNAEEEALQAWEAADEYLLQQVNDVDGLTLIFNDGFGALACALAERNPVSINDSFISELATRHNLRMNGIDEESVRFQDSLSPLPAAPALVLIKVPKQLALLEQQLRALREVVTPETRIIAAAKARDVHNSTLALFEKILGTTTTSLAWKKARLIHCVFTAPELADAPQTYSWKLDGTPWTIHNHANVFARSGLDIGARFFLQHLPSDLEGEIADLGCGNGVIGLQALAQNPNARVMFTDESHMAVASSRLNVERNLPDDIARCEFMVNNSLSGIEPDRFTAILCNPPFHQQHAITDHIAWQMFNDARRSLKYGGELYVVGNRHLDYFRKLKRAFGNCTTIATNNKFVILKATKVRKQR</sequence>
<proteinExistence type="inferred from homology"/>
<feature type="chain" id="PRO_0000366467" description="Ribosomal RNA large subunit methyltransferase G">
    <location>
        <begin position="1"/>
        <end position="376"/>
    </location>
</feature>
<evidence type="ECO:0000255" key="1">
    <source>
        <dbReference type="HAMAP-Rule" id="MF_01859"/>
    </source>
</evidence>
<accession>A6TEC2</accession>